<comment type="function">
    <text evidence="1">Multifunctional RNA-binding protein that recognizes the K-turn motif in ribosomal RNA, the RNA component of RNase P, box H/ACA, box C/D and box C'/D' sRNAs.</text>
</comment>
<comment type="subunit">
    <text evidence="1">Part of the 50S ribosomal subunit. Probably part of the RNase P complex.</text>
</comment>
<comment type="subcellular location">
    <subcellularLocation>
        <location evidence="1">Cytoplasm</location>
    </subcellularLocation>
</comment>
<comment type="similarity">
    <text evidence="1">Belongs to the eukaryotic ribosomal protein eL8 family.</text>
</comment>
<evidence type="ECO:0000255" key="1">
    <source>
        <dbReference type="HAMAP-Rule" id="MF_00326"/>
    </source>
</evidence>
<evidence type="ECO:0000305" key="2"/>
<proteinExistence type="inferred from homology"/>
<name>RL7A_SACI3</name>
<reference key="1">
    <citation type="journal article" date="2009" name="Proc. Natl. Acad. Sci. U.S.A.">
        <title>Biogeography of the Sulfolobus islandicus pan-genome.</title>
        <authorList>
            <person name="Reno M.L."/>
            <person name="Held N.L."/>
            <person name="Fields C.J."/>
            <person name="Burke P.V."/>
            <person name="Whitaker R.J."/>
        </authorList>
    </citation>
    <scope>NUCLEOTIDE SEQUENCE [LARGE SCALE GENOMIC DNA]</scope>
    <source>
        <strain>M.16.27</strain>
    </source>
</reference>
<sequence length="127" mass="13708">MSKASYVKFEVPQDLADKVLEAVRKAKESGKIKKGTNETTKAVERGQAKLVVIAEDVQPEEIVAHLPLLCDEKKIPYVYVSSKKALGEACGLQVATASAAILEPGEAKDLVDEIVKRVNEIKGKTSS</sequence>
<keyword id="KW-0963">Cytoplasm</keyword>
<keyword id="KW-0687">Ribonucleoprotein</keyword>
<keyword id="KW-0689">Ribosomal protein</keyword>
<keyword id="KW-0694">RNA-binding</keyword>
<keyword id="KW-0699">rRNA-binding</keyword>
<keyword id="KW-0819">tRNA processing</keyword>
<protein>
    <recommendedName>
        <fullName evidence="1">Large ribosomal subunit protein eL8</fullName>
    </recommendedName>
    <alternativeName>
        <fullName evidence="2">50S ribosomal protein L7Ae</fullName>
    </alternativeName>
    <alternativeName>
        <fullName evidence="1">Ribosomal protein L8e</fullName>
    </alternativeName>
</protein>
<accession>C3N038</accession>
<organism>
    <name type="scientific">Saccharolobus islandicus (strain M.16.27)</name>
    <name type="common">Sulfolobus islandicus</name>
    <dbReference type="NCBI Taxonomy" id="427318"/>
    <lineage>
        <taxon>Archaea</taxon>
        <taxon>Thermoproteota</taxon>
        <taxon>Thermoprotei</taxon>
        <taxon>Sulfolobales</taxon>
        <taxon>Sulfolobaceae</taxon>
        <taxon>Saccharolobus</taxon>
    </lineage>
</organism>
<gene>
    <name evidence="1" type="primary">rpl7ae</name>
    <name type="ordered locus">M1627_2112</name>
</gene>
<feature type="chain" id="PRO_1000205159" description="Large ribosomal subunit protein eL8">
    <location>
        <begin position="1"/>
        <end position="127"/>
    </location>
</feature>
<dbReference type="EMBL" id="CP001401">
    <property type="protein sequence ID" value="ACP55978.1"/>
    <property type="molecule type" value="Genomic_DNA"/>
</dbReference>
<dbReference type="RefSeq" id="WP_012711999.1">
    <property type="nucleotide sequence ID" value="NC_012632.1"/>
</dbReference>
<dbReference type="SMR" id="C3N038"/>
<dbReference type="GeneID" id="84062343"/>
<dbReference type="KEGG" id="sim:M1627_2112"/>
<dbReference type="HOGENOM" id="CLU_084513_4_0_2"/>
<dbReference type="Proteomes" id="UP000002307">
    <property type="component" value="Chromosome"/>
</dbReference>
<dbReference type="GO" id="GO:0005737">
    <property type="term" value="C:cytoplasm"/>
    <property type="evidence" value="ECO:0007669"/>
    <property type="project" value="UniProtKB-SubCell"/>
</dbReference>
<dbReference type="GO" id="GO:1990904">
    <property type="term" value="C:ribonucleoprotein complex"/>
    <property type="evidence" value="ECO:0007669"/>
    <property type="project" value="UniProtKB-KW"/>
</dbReference>
<dbReference type="GO" id="GO:0005840">
    <property type="term" value="C:ribosome"/>
    <property type="evidence" value="ECO:0007669"/>
    <property type="project" value="UniProtKB-KW"/>
</dbReference>
<dbReference type="GO" id="GO:0004526">
    <property type="term" value="F:ribonuclease P activity"/>
    <property type="evidence" value="ECO:0007669"/>
    <property type="project" value="UniProtKB-UniRule"/>
</dbReference>
<dbReference type="GO" id="GO:0019843">
    <property type="term" value="F:rRNA binding"/>
    <property type="evidence" value="ECO:0007669"/>
    <property type="project" value="UniProtKB-KW"/>
</dbReference>
<dbReference type="GO" id="GO:0003735">
    <property type="term" value="F:structural constituent of ribosome"/>
    <property type="evidence" value="ECO:0007669"/>
    <property type="project" value="InterPro"/>
</dbReference>
<dbReference type="GO" id="GO:0042254">
    <property type="term" value="P:ribosome biogenesis"/>
    <property type="evidence" value="ECO:0007669"/>
    <property type="project" value="InterPro"/>
</dbReference>
<dbReference type="GO" id="GO:0006412">
    <property type="term" value="P:translation"/>
    <property type="evidence" value="ECO:0007669"/>
    <property type="project" value="UniProtKB-UniRule"/>
</dbReference>
<dbReference type="GO" id="GO:0001682">
    <property type="term" value="P:tRNA 5'-leader removal"/>
    <property type="evidence" value="ECO:0007669"/>
    <property type="project" value="UniProtKB-UniRule"/>
</dbReference>
<dbReference type="FunFam" id="3.30.1330.30:FF:000020">
    <property type="entry name" value="50S ribosomal protein L7Ae"/>
    <property type="match status" value="1"/>
</dbReference>
<dbReference type="Gene3D" id="3.30.1330.30">
    <property type="match status" value="1"/>
</dbReference>
<dbReference type="HAMAP" id="MF_00326">
    <property type="entry name" value="Ribosomal_eL8"/>
    <property type="match status" value="1"/>
</dbReference>
<dbReference type="InterPro" id="IPR050257">
    <property type="entry name" value="eL8/uL1-like"/>
</dbReference>
<dbReference type="InterPro" id="IPR029064">
    <property type="entry name" value="Ribosomal_eL30-like_sf"/>
</dbReference>
<dbReference type="InterPro" id="IPR004037">
    <property type="entry name" value="Ribosomal_eL8-like_CS"/>
</dbReference>
<dbReference type="InterPro" id="IPR004038">
    <property type="entry name" value="Ribosomal_eL8/eL30/eS12/Gad45"/>
</dbReference>
<dbReference type="InterPro" id="IPR018492">
    <property type="entry name" value="Ribosomal_eL8/Nhp2"/>
</dbReference>
<dbReference type="InterPro" id="IPR022481">
    <property type="entry name" value="Ribosomal_eL8_arc"/>
</dbReference>
<dbReference type="NCBIfam" id="TIGR03677">
    <property type="entry name" value="eL8_ribo"/>
    <property type="match status" value="1"/>
</dbReference>
<dbReference type="PANTHER" id="PTHR23105">
    <property type="entry name" value="RIBOSOMAL PROTEIN L7AE FAMILY MEMBER"/>
    <property type="match status" value="1"/>
</dbReference>
<dbReference type="Pfam" id="PF01248">
    <property type="entry name" value="Ribosomal_L7Ae"/>
    <property type="match status" value="1"/>
</dbReference>
<dbReference type="PRINTS" id="PR00881">
    <property type="entry name" value="L7ARS6FAMILY"/>
</dbReference>
<dbReference type="PRINTS" id="PR00884">
    <property type="entry name" value="RIBOSOMALHS6"/>
</dbReference>
<dbReference type="SUPFAM" id="SSF55315">
    <property type="entry name" value="L30e-like"/>
    <property type="match status" value="1"/>
</dbReference>
<dbReference type="PROSITE" id="PS01082">
    <property type="entry name" value="RIBOSOMAL_L7AE"/>
    <property type="match status" value="1"/>
</dbReference>